<keyword id="KW-0963">Cytoplasm</keyword>
<keyword id="KW-0227">DNA damage</keyword>
<keyword id="KW-0233">DNA recombination</keyword>
<keyword id="KW-0234">DNA repair</keyword>
<keyword id="KW-0238">DNA-binding</keyword>
<keyword id="KW-1185">Reference proteome</keyword>
<organism>
    <name type="scientific">Cellvibrio japonicus (strain Ueda107)</name>
    <name type="common">Pseudomonas fluorescens subsp. cellulosa</name>
    <dbReference type="NCBI Taxonomy" id="498211"/>
    <lineage>
        <taxon>Bacteria</taxon>
        <taxon>Pseudomonadati</taxon>
        <taxon>Pseudomonadota</taxon>
        <taxon>Gammaproteobacteria</taxon>
        <taxon>Cellvibrionales</taxon>
        <taxon>Cellvibrionaceae</taxon>
        <taxon>Cellvibrio</taxon>
    </lineage>
</organism>
<accession>B3PB58</accession>
<evidence type="ECO:0000255" key="1">
    <source>
        <dbReference type="HAMAP-Rule" id="MF_00031"/>
    </source>
</evidence>
<protein>
    <recommendedName>
        <fullName evidence="1">Holliday junction branch migration complex subunit RuvA</fullName>
    </recommendedName>
</protein>
<feature type="chain" id="PRO_1000090295" description="Holliday junction branch migration complex subunit RuvA">
    <location>
        <begin position="1"/>
        <end position="205"/>
    </location>
</feature>
<feature type="region of interest" description="Domain I" evidence="1">
    <location>
        <begin position="1"/>
        <end position="64"/>
    </location>
</feature>
<feature type="region of interest" description="Domain II" evidence="1">
    <location>
        <begin position="65"/>
        <end position="143"/>
    </location>
</feature>
<feature type="region of interest" description="Flexible linker" evidence="1">
    <location>
        <begin position="144"/>
        <end position="153"/>
    </location>
</feature>
<feature type="region of interest" description="Domain III" evidence="1">
    <location>
        <begin position="153"/>
        <end position="205"/>
    </location>
</feature>
<proteinExistence type="inferred from homology"/>
<comment type="function">
    <text evidence="1">The RuvA-RuvB-RuvC complex processes Holliday junction (HJ) DNA during genetic recombination and DNA repair, while the RuvA-RuvB complex plays an important role in the rescue of blocked DNA replication forks via replication fork reversal (RFR). RuvA specifically binds to HJ cruciform DNA, conferring on it an open structure. The RuvB hexamer acts as an ATP-dependent pump, pulling dsDNA into and through the RuvAB complex. HJ branch migration allows RuvC to scan DNA until it finds its consensus sequence, where it cleaves and resolves the cruciform DNA.</text>
</comment>
<comment type="subunit">
    <text evidence="1">Homotetramer. Forms an RuvA(8)-RuvB(12)-Holliday junction (HJ) complex. HJ DNA is sandwiched between 2 RuvA tetramers; dsDNA enters through RuvA and exits via RuvB. An RuvB hexamer assembles on each DNA strand where it exits the tetramer. Each RuvB hexamer is contacted by two RuvA subunits (via domain III) on 2 adjacent RuvB subunits; this complex drives branch migration. In the full resolvosome a probable DNA-RuvA(4)-RuvB(12)-RuvC(2) complex forms which resolves the HJ.</text>
</comment>
<comment type="subcellular location">
    <subcellularLocation>
        <location evidence="1">Cytoplasm</location>
    </subcellularLocation>
</comment>
<comment type="domain">
    <text evidence="1">Has three domains with a flexible linker between the domains II and III and assumes an 'L' shape. Domain III is highly mobile and contacts RuvB.</text>
</comment>
<comment type="similarity">
    <text evidence="1">Belongs to the RuvA family.</text>
</comment>
<gene>
    <name evidence="1" type="primary">ruvA</name>
    <name type="ordered locus">CJA_1030</name>
</gene>
<dbReference type="EMBL" id="CP000934">
    <property type="protein sequence ID" value="ACE84701.1"/>
    <property type="molecule type" value="Genomic_DNA"/>
</dbReference>
<dbReference type="RefSeq" id="WP_012486678.1">
    <property type="nucleotide sequence ID" value="NC_010995.1"/>
</dbReference>
<dbReference type="SMR" id="B3PB58"/>
<dbReference type="STRING" id="498211.CJA_1030"/>
<dbReference type="KEGG" id="cja:CJA_1030"/>
<dbReference type="eggNOG" id="COG0632">
    <property type="taxonomic scope" value="Bacteria"/>
</dbReference>
<dbReference type="HOGENOM" id="CLU_087936_0_0_6"/>
<dbReference type="OrthoDB" id="5293449at2"/>
<dbReference type="Proteomes" id="UP000001036">
    <property type="component" value="Chromosome"/>
</dbReference>
<dbReference type="GO" id="GO:0005737">
    <property type="term" value="C:cytoplasm"/>
    <property type="evidence" value="ECO:0007669"/>
    <property type="project" value="UniProtKB-SubCell"/>
</dbReference>
<dbReference type="GO" id="GO:0009379">
    <property type="term" value="C:Holliday junction helicase complex"/>
    <property type="evidence" value="ECO:0007669"/>
    <property type="project" value="InterPro"/>
</dbReference>
<dbReference type="GO" id="GO:0048476">
    <property type="term" value="C:Holliday junction resolvase complex"/>
    <property type="evidence" value="ECO:0007669"/>
    <property type="project" value="UniProtKB-UniRule"/>
</dbReference>
<dbReference type="GO" id="GO:0005524">
    <property type="term" value="F:ATP binding"/>
    <property type="evidence" value="ECO:0007669"/>
    <property type="project" value="InterPro"/>
</dbReference>
<dbReference type="GO" id="GO:0000400">
    <property type="term" value="F:four-way junction DNA binding"/>
    <property type="evidence" value="ECO:0007669"/>
    <property type="project" value="UniProtKB-UniRule"/>
</dbReference>
<dbReference type="GO" id="GO:0009378">
    <property type="term" value="F:four-way junction helicase activity"/>
    <property type="evidence" value="ECO:0007669"/>
    <property type="project" value="InterPro"/>
</dbReference>
<dbReference type="GO" id="GO:0006310">
    <property type="term" value="P:DNA recombination"/>
    <property type="evidence" value="ECO:0007669"/>
    <property type="project" value="UniProtKB-UniRule"/>
</dbReference>
<dbReference type="GO" id="GO:0006281">
    <property type="term" value="P:DNA repair"/>
    <property type="evidence" value="ECO:0007669"/>
    <property type="project" value="UniProtKB-UniRule"/>
</dbReference>
<dbReference type="CDD" id="cd14332">
    <property type="entry name" value="UBA_RuvA_C"/>
    <property type="match status" value="1"/>
</dbReference>
<dbReference type="Gene3D" id="1.10.150.20">
    <property type="entry name" value="5' to 3' exonuclease, C-terminal subdomain"/>
    <property type="match status" value="1"/>
</dbReference>
<dbReference type="Gene3D" id="1.10.8.10">
    <property type="entry name" value="DNA helicase RuvA subunit, C-terminal domain"/>
    <property type="match status" value="1"/>
</dbReference>
<dbReference type="Gene3D" id="2.40.50.140">
    <property type="entry name" value="Nucleic acid-binding proteins"/>
    <property type="match status" value="1"/>
</dbReference>
<dbReference type="HAMAP" id="MF_00031">
    <property type="entry name" value="DNA_HJ_migration_RuvA"/>
    <property type="match status" value="1"/>
</dbReference>
<dbReference type="InterPro" id="IPR013849">
    <property type="entry name" value="DNA_helicase_Holl-junc_RuvA_I"/>
</dbReference>
<dbReference type="InterPro" id="IPR003583">
    <property type="entry name" value="Hlx-hairpin-Hlx_DNA-bd_motif"/>
</dbReference>
<dbReference type="InterPro" id="IPR012340">
    <property type="entry name" value="NA-bd_OB-fold"/>
</dbReference>
<dbReference type="InterPro" id="IPR000085">
    <property type="entry name" value="RuvA"/>
</dbReference>
<dbReference type="InterPro" id="IPR010994">
    <property type="entry name" value="RuvA_2-like"/>
</dbReference>
<dbReference type="InterPro" id="IPR011114">
    <property type="entry name" value="RuvA_C"/>
</dbReference>
<dbReference type="InterPro" id="IPR036267">
    <property type="entry name" value="RuvA_C_sf"/>
</dbReference>
<dbReference type="NCBIfam" id="TIGR00084">
    <property type="entry name" value="ruvA"/>
    <property type="match status" value="1"/>
</dbReference>
<dbReference type="Pfam" id="PF14520">
    <property type="entry name" value="HHH_5"/>
    <property type="match status" value="1"/>
</dbReference>
<dbReference type="Pfam" id="PF07499">
    <property type="entry name" value="RuvA_C"/>
    <property type="match status" value="1"/>
</dbReference>
<dbReference type="Pfam" id="PF01330">
    <property type="entry name" value="RuvA_N"/>
    <property type="match status" value="1"/>
</dbReference>
<dbReference type="SMART" id="SM00278">
    <property type="entry name" value="HhH1"/>
    <property type="match status" value="2"/>
</dbReference>
<dbReference type="SUPFAM" id="SSF46929">
    <property type="entry name" value="DNA helicase RuvA subunit, C-terminal domain"/>
    <property type="match status" value="1"/>
</dbReference>
<dbReference type="SUPFAM" id="SSF50249">
    <property type="entry name" value="Nucleic acid-binding proteins"/>
    <property type="match status" value="1"/>
</dbReference>
<dbReference type="SUPFAM" id="SSF47781">
    <property type="entry name" value="RuvA domain 2-like"/>
    <property type="match status" value="1"/>
</dbReference>
<name>RUVA_CELJU</name>
<reference key="1">
    <citation type="journal article" date="2008" name="J. Bacteriol.">
        <title>Insights into plant cell wall degradation from the genome sequence of the soil bacterium Cellvibrio japonicus.</title>
        <authorList>
            <person name="DeBoy R.T."/>
            <person name="Mongodin E.F."/>
            <person name="Fouts D.E."/>
            <person name="Tailford L.E."/>
            <person name="Khouri H."/>
            <person name="Emerson J.B."/>
            <person name="Mohamoud Y."/>
            <person name="Watkins K."/>
            <person name="Henrissat B."/>
            <person name="Gilbert H.J."/>
            <person name="Nelson K.E."/>
        </authorList>
    </citation>
    <scope>NUCLEOTIDE SEQUENCE [LARGE SCALE GENOMIC DNA]</scope>
    <source>
        <strain>Ueda107</strain>
    </source>
</reference>
<sequence length="205" mass="22574">MIGRLKGILIEKQPPYLLLDVNGVGYELQAPMTTFYRLPSLGHEVVLHTHLSITENLHQLFGFAEQRDRSLFRTLIKVNGVGPKLAVAILSGMESDDIARCVRDNNIKALTRVPGIGQKTAERLVIELRDRLKNWDLPQGDMLAHGEIQAIASDNDIYAEAESALIALGYKPVDAAKMVASAAKQKPEARSEELIRIALRSLAGV</sequence>